<proteinExistence type="inferred from homology"/>
<reference key="1">
    <citation type="journal article" date="2006" name="Lancet">
        <title>Complete genome sequence of USA300, an epidemic clone of community-acquired meticillin-resistant Staphylococcus aureus.</title>
        <authorList>
            <person name="Diep B.A."/>
            <person name="Gill S.R."/>
            <person name="Chang R.F."/>
            <person name="Phan T.H."/>
            <person name="Chen J.H."/>
            <person name="Davidson M.G."/>
            <person name="Lin F."/>
            <person name="Lin J."/>
            <person name="Carleton H.A."/>
            <person name="Mongodin E.F."/>
            <person name="Sensabaugh G.F."/>
            <person name="Perdreau-Remington F."/>
        </authorList>
    </citation>
    <scope>NUCLEOTIDE SEQUENCE [LARGE SCALE GENOMIC DNA]</scope>
    <source>
        <strain>USA300</strain>
    </source>
</reference>
<accession>Q2FI93</accession>
<sequence length="313" mass="33879">MNVGIKGFGAYAPEKIIDNAYFEQFLDTSDEWISKMTGIKERHWADDDQDTSDLAYEASLKAIADAGIQPEDIDMIIVATATGDMPFPTVANMLQERLGTGKVASMDQLAACSGFMYSMITAKQYVQSGDYHNILVVGADKLSKITDLTDRSTAVLFGDGAGAVIIGEVSDGRGIISYEMGSDGTGGKHLYLDKDTGKLKMNGREVFKFAVRIMGDASTRVVEKANLTSDDIDLFIPHQANIRIMESARERLGISKDKMSVSVNKYGNTSAASIPLSIDQELKNGKIKDDDTIVLVGFGGGLTWGAMTIKWGK</sequence>
<feature type="chain" id="PRO_1000056415" description="Beta-ketoacyl-[acyl-carrier-protein] synthase III">
    <location>
        <begin position="1"/>
        <end position="313"/>
    </location>
</feature>
<feature type="region of interest" description="ACP-binding" evidence="1">
    <location>
        <begin position="239"/>
        <end position="243"/>
    </location>
</feature>
<feature type="active site" evidence="1">
    <location>
        <position position="112"/>
    </location>
</feature>
<feature type="active site" evidence="1">
    <location>
        <position position="238"/>
    </location>
</feature>
<feature type="active site" evidence="1">
    <location>
        <position position="268"/>
    </location>
</feature>
<protein>
    <recommendedName>
        <fullName evidence="1">Beta-ketoacyl-[acyl-carrier-protein] synthase III</fullName>
        <shortName evidence="1">Beta-ketoacyl-ACP synthase III</shortName>
        <shortName evidence="1">KAS III</shortName>
        <ecNumber evidence="1">2.3.1.180</ecNumber>
    </recommendedName>
    <alternativeName>
        <fullName evidence="1">3-oxoacyl-[acyl-carrier-protein] synthase 3</fullName>
    </alternativeName>
    <alternativeName>
        <fullName evidence="1">3-oxoacyl-[acyl-carrier-protein] synthase III</fullName>
    </alternativeName>
</protein>
<evidence type="ECO:0000255" key="1">
    <source>
        <dbReference type="HAMAP-Rule" id="MF_01815"/>
    </source>
</evidence>
<keyword id="KW-0012">Acyltransferase</keyword>
<keyword id="KW-0963">Cytoplasm</keyword>
<keyword id="KW-0275">Fatty acid biosynthesis</keyword>
<keyword id="KW-0276">Fatty acid metabolism</keyword>
<keyword id="KW-0444">Lipid biosynthesis</keyword>
<keyword id="KW-0443">Lipid metabolism</keyword>
<keyword id="KW-0511">Multifunctional enzyme</keyword>
<keyword id="KW-0808">Transferase</keyword>
<gene>
    <name evidence="1" type="primary">fabH</name>
    <name type="ordered locus">SAUSA300_0885</name>
</gene>
<comment type="function">
    <text evidence="1">Catalyzes the condensation reaction of fatty acid synthesis by the addition to an acyl acceptor of two carbons from malonyl-ACP. Catalyzes the first condensation reaction which initiates fatty acid synthesis and may therefore play a role in governing the total rate of fatty acid production. Possesses both acetoacetyl-ACP synthase and acetyl transacylase activities. Its substrate specificity determines the biosynthesis of branched-chain and/or straight-chain of fatty acids.</text>
</comment>
<comment type="catalytic activity">
    <reaction evidence="1">
        <text>malonyl-[ACP] + acetyl-CoA + H(+) = 3-oxobutanoyl-[ACP] + CO2 + CoA</text>
        <dbReference type="Rhea" id="RHEA:12080"/>
        <dbReference type="Rhea" id="RHEA-COMP:9623"/>
        <dbReference type="Rhea" id="RHEA-COMP:9625"/>
        <dbReference type="ChEBI" id="CHEBI:15378"/>
        <dbReference type="ChEBI" id="CHEBI:16526"/>
        <dbReference type="ChEBI" id="CHEBI:57287"/>
        <dbReference type="ChEBI" id="CHEBI:57288"/>
        <dbReference type="ChEBI" id="CHEBI:78449"/>
        <dbReference type="ChEBI" id="CHEBI:78450"/>
        <dbReference type="EC" id="2.3.1.180"/>
    </reaction>
</comment>
<comment type="pathway">
    <text evidence="1">Lipid metabolism; fatty acid biosynthesis.</text>
</comment>
<comment type="subunit">
    <text evidence="1">Homodimer.</text>
</comment>
<comment type="subcellular location">
    <subcellularLocation>
        <location evidence="1">Cytoplasm</location>
    </subcellularLocation>
</comment>
<comment type="domain">
    <text evidence="1">The last Arg residue of the ACP-binding site is essential for the weak association between ACP/AcpP and FabH.</text>
</comment>
<comment type="similarity">
    <text evidence="1">Belongs to the thiolase-like superfamily. FabH family.</text>
</comment>
<organism>
    <name type="scientific">Staphylococcus aureus (strain USA300)</name>
    <dbReference type="NCBI Taxonomy" id="367830"/>
    <lineage>
        <taxon>Bacteria</taxon>
        <taxon>Bacillati</taxon>
        <taxon>Bacillota</taxon>
        <taxon>Bacilli</taxon>
        <taxon>Bacillales</taxon>
        <taxon>Staphylococcaceae</taxon>
        <taxon>Staphylococcus</taxon>
    </lineage>
</organism>
<name>FABH_STAA3</name>
<dbReference type="EC" id="2.3.1.180" evidence="1"/>
<dbReference type="EMBL" id="CP000255">
    <property type="protein sequence ID" value="ABD20566.1"/>
    <property type="molecule type" value="Genomic_DNA"/>
</dbReference>
<dbReference type="RefSeq" id="WP_001100525.1">
    <property type="nucleotide sequence ID" value="NZ_CP027476.1"/>
</dbReference>
<dbReference type="SMR" id="Q2FI93"/>
<dbReference type="KEGG" id="saa:SAUSA300_0885"/>
<dbReference type="HOGENOM" id="CLU_039592_3_1_9"/>
<dbReference type="OMA" id="WGSEGDK"/>
<dbReference type="UniPathway" id="UPA00094"/>
<dbReference type="Proteomes" id="UP000001939">
    <property type="component" value="Chromosome"/>
</dbReference>
<dbReference type="GO" id="GO:0005737">
    <property type="term" value="C:cytoplasm"/>
    <property type="evidence" value="ECO:0007669"/>
    <property type="project" value="UniProtKB-SubCell"/>
</dbReference>
<dbReference type="GO" id="GO:0004315">
    <property type="term" value="F:3-oxoacyl-[acyl-carrier-protein] synthase activity"/>
    <property type="evidence" value="ECO:0007669"/>
    <property type="project" value="InterPro"/>
</dbReference>
<dbReference type="GO" id="GO:0033818">
    <property type="term" value="F:beta-ketoacyl-acyl-carrier-protein synthase III activity"/>
    <property type="evidence" value="ECO:0007669"/>
    <property type="project" value="UniProtKB-UniRule"/>
</dbReference>
<dbReference type="GO" id="GO:0006633">
    <property type="term" value="P:fatty acid biosynthetic process"/>
    <property type="evidence" value="ECO:0007669"/>
    <property type="project" value="UniProtKB-UniRule"/>
</dbReference>
<dbReference type="CDD" id="cd00830">
    <property type="entry name" value="KAS_III"/>
    <property type="match status" value="1"/>
</dbReference>
<dbReference type="FunFam" id="3.40.47.10:FF:000004">
    <property type="entry name" value="3-oxoacyl-[acyl-carrier-protein] synthase 3"/>
    <property type="match status" value="1"/>
</dbReference>
<dbReference type="Gene3D" id="3.40.47.10">
    <property type="match status" value="1"/>
</dbReference>
<dbReference type="HAMAP" id="MF_01815">
    <property type="entry name" value="FabH"/>
    <property type="match status" value="1"/>
</dbReference>
<dbReference type="InterPro" id="IPR013747">
    <property type="entry name" value="ACP_syn_III_C"/>
</dbReference>
<dbReference type="InterPro" id="IPR013751">
    <property type="entry name" value="ACP_syn_III_N"/>
</dbReference>
<dbReference type="InterPro" id="IPR004655">
    <property type="entry name" value="FabH"/>
</dbReference>
<dbReference type="InterPro" id="IPR016039">
    <property type="entry name" value="Thiolase-like"/>
</dbReference>
<dbReference type="NCBIfam" id="TIGR00747">
    <property type="entry name" value="fabH"/>
    <property type="match status" value="1"/>
</dbReference>
<dbReference type="NCBIfam" id="NF006829">
    <property type="entry name" value="PRK09352.1"/>
    <property type="match status" value="1"/>
</dbReference>
<dbReference type="PANTHER" id="PTHR43091">
    <property type="entry name" value="3-OXOACYL-[ACYL-CARRIER-PROTEIN] SYNTHASE"/>
    <property type="match status" value="1"/>
</dbReference>
<dbReference type="PANTHER" id="PTHR43091:SF1">
    <property type="entry name" value="BETA-KETOACYL-[ACYL-CARRIER-PROTEIN] SYNTHASE III, CHLOROPLASTIC"/>
    <property type="match status" value="1"/>
</dbReference>
<dbReference type="Pfam" id="PF08545">
    <property type="entry name" value="ACP_syn_III"/>
    <property type="match status" value="1"/>
</dbReference>
<dbReference type="Pfam" id="PF08541">
    <property type="entry name" value="ACP_syn_III_C"/>
    <property type="match status" value="1"/>
</dbReference>
<dbReference type="SUPFAM" id="SSF53901">
    <property type="entry name" value="Thiolase-like"/>
    <property type="match status" value="1"/>
</dbReference>